<proteinExistence type="inferred from homology"/>
<reference key="1">
    <citation type="journal article" date="2000" name="Mol. Biol. Evol.">
        <title>Phylogeny and divergence times in Pinaceae: evidence from three genomes.</title>
        <authorList>
            <person name="Wang X.Q."/>
            <person name="Tank D.C."/>
            <person name="Sang T."/>
        </authorList>
    </citation>
    <scope>NUCLEOTIDE SEQUENCE [GENOMIC DNA]</scope>
</reference>
<name>MATK_CEDAT</name>
<organism>
    <name type="scientific">Cedrus atlantica</name>
    <name type="common">Atlas cedar</name>
    <name type="synonym">Pinus atlantica</name>
    <dbReference type="NCBI Taxonomy" id="123597"/>
    <lineage>
        <taxon>Eukaryota</taxon>
        <taxon>Viridiplantae</taxon>
        <taxon>Streptophyta</taxon>
        <taxon>Embryophyta</taxon>
        <taxon>Tracheophyta</taxon>
        <taxon>Spermatophyta</taxon>
        <taxon>Pinopsida</taxon>
        <taxon>Pinidae</taxon>
        <taxon>Conifers I</taxon>
        <taxon>Pinales</taxon>
        <taxon>Pinaceae</taxon>
        <taxon>Cedrus</taxon>
    </lineage>
</organism>
<feature type="chain" id="PRO_0000143316" description="Maturase K">
    <location>
        <begin position="1"/>
        <end position="515"/>
    </location>
</feature>
<geneLocation type="chloroplast"/>
<protein>
    <recommendedName>
        <fullName evidence="1">Maturase K</fullName>
    </recommendedName>
    <alternativeName>
        <fullName evidence="1">Intron maturase</fullName>
    </alternativeName>
</protein>
<evidence type="ECO:0000255" key="1">
    <source>
        <dbReference type="HAMAP-Rule" id="MF_01390"/>
    </source>
</evidence>
<gene>
    <name evidence="1" type="primary">matK</name>
</gene>
<sequence>MDEFHRYGKEDSSWQQCFLYPLFFQEDLYAISHDHYLDGSSSSEPMEHFSFNDQLSFLTVKRLIGRIREQNHSIGLFVNCDPNPLVDRNKSSYFESVLEGLTLVLEVPFSTRSKYSVQGIKEWKSFRSIHSIFPFLEEKFPHSNYILDTRIPYSIHPEFLVRTFRRWIQDAPSLHPLRSVLYEYRNSPENLQRSIIVAPRVNTRFFLFLWNHYAYECESILVPLLKRSFQSRSSSHGSFPERTLFDRKIKHIIRISHRNSLKSIWFLKDPKIHYVRYGERSIIAIKGTHLLVKKCRYYLPIFRQCYFHLWSEPYRVCSHQLSKNCSSFPGYSLGVRMKPLLVRTKMPGELFITDLITDEFYPIVPIVSIIGLLAREKFCDISGRPISKLAWTSLTDDDILDRFDRIWRNFFHYYSGSFGRDGLYRIKYILSLSCAKTLACKHKSTIRVVRKELGPELFKKSFSKEREFDSPAFSSKAVARSQRERIWHSDIPQINPLANSWQKIQDLKIKNLFDQ</sequence>
<dbReference type="EMBL" id="AF143431">
    <property type="protein sequence ID" value="AAF69186.1"/>
    <property type="molecule type" value="Genomic_DNA"/>
</dbReference>
<dbReference type="GO" id="GO:0009507">
    <property type="term" value="C:chloroplast"/>
    <property type="evidence" value="ECO:0007669"/>
    <property type="project" value="UniProtKB-SubCell"/>
</dbReference>
<dbReference type="GO" id="GO:0003723">
    <property type="term" value="F:RNA binding"/>
    <property type="evidence" value="ECO:0007669"/>
    <property type="project" value="UniProtKB-KW"/>
</dbReference>
<dbReference type="GO" id="GO:0006397">
    <property type="term" value="P:mRNA processing"/>
    <property type="evidence" value="ECO:0007669"/>
    <property type="project" value="UniProtKB-KW"/>
</dbReference>
<dbReference type="GO" id="GO:0008380">
    <property type="term" value="P:RNA splicing"/>
    <property type="evidence" value="ECO:0007669"/>
    <property type="project" value="UniProtKB-UniRule"/>
</dbReference>
<dbReference type="GO" id="GO:0008033">
    <property type="term" value="P:tRNA processing"/>
    <property type="evidence" value="ECO:0007669"/>
    <property type="project" value="UniProtKB-KW"/>
</dbReference>
<dbReference type="HAMAP" id="MF_01390">
    <property type="entry name" value="MatK"/>
    <property type="match status" value="1"/>
</dbReference>
<dbReference type="InterPro" id="IPR024937">
    <property type="entry name" value="Domain_X"/>
</dbReference>
<dbReference type="InterPro" id="IPR002866">
    <property type="entry name" value="Maturase_MatK"/>
</dbReference>
<dbReference type="InterPro" id="IPR024942">
    <property type="entry name" value="Maturase_MatK_N"/>
</dbReference>
<dbReference type="PANTHER" id="PTHR34811">
    <property type="entry name" value="MATURASE K"/>
    <property type="match status" value="1"/>
</dbReference>
<dbReference type="PANTHER" id="PTHR34811:SF1">
    <property type="entry name" value="MATURASE K"/>
    <property type="match status" value="1"/>
</dbReference>
<dbReference type="Pfam" id="PF01348">
    <property type="entry name" value="Intron_maturas2"/>
    <property type="match status" value="1"/>
</dbReference>
<dbReference type="Pfam" id="PF01824">
    <property type="entry name" value="MatK_N"/>
    <property type="match status" value="1"/>
</dbReference>
<comment type="function">
    <text evidence="1">Usually encoded in the trnK tRNA gene intron. Probably assists in splicing its own and other chloroplast group II introns.</text>
</comment>
<comment type="subcellular location">
    <subcellularLocation>
        <location>Plastid</location>
        <location>Chloroplast</location>
    </subcellularLocation>
</comment>
<comment type="similarity">
    <text evidence="1">Belongs to the intron maturase 2 family. MatK subfamily.</text>
</comment>
<keyword id="KW-0150">Chloroplast</keyword>
<keyword id="KW-0507">mRNA processing</keyword>
<keyword id="KW-0934">Plastid</keyword>
<keyword id="KW-0694">RNA-binding</keyword>
<keyword id="KW-0819">tRNA processing</keyword>
<accession>Q9MV56</accession>